<proteinExistence type="inferred from homology"/>
<reference key="1">
    <citation type="journal article" date="2007" name="Science">
        <title>Legumes symbioses: absence of nod genes in photosynthetic bradyrhizobia.</title>
        <authorList>
            <person name="Giraud E."/>
            <person name="Moulin L."/>
            <person name="Vallenet D."/>
            <person name="Barbe V."/>
            <person name="Cytryn E."/>
            <person name="Avarre J.-C."/>
            <person name="Jaubert M."/>
            <person name="Simon D."/>
            <person name="Cartieaux F."/>
            <person name="Prin Y."/>
            <person name="Bena G."/>
            <person name="Hannibal L."/>
            <person name="Fardoux J."/>
            <person name="Kojadinovic M."/>
            <person name="Vuillet L."/>
            <person name="Lajus A."/>
            <person name="Cruveiller S."/>
            <person name="Rouy Z."/>
            <person name="Mangenot S."/>
            <person name="Segurens B."/>
            <person name="Dossat C."/>
            <person name="Franck W.L."/>
            <person name="Chang W.-S."/>
            <person name="Saunders E."/>
            <person name="Bruce D."/>
            <person name="Richardson P."/>
            <person name="Normand P."/>
            <person name="Dreyfus B."/>
            <person name="Pignol D."/>
            <person name="Stacey G."/>
            <person name="Emerich D."/>
            <person name="Vermeglio A."/>
            <person name="Medigue C."/>
            <person name="Sadowsky M."/>
        </authorList>
    </citation>
    <scope>NUCLEOTIDE SEQUENCE [LARGE SCALE GENOMIC DNA]</scope>
    <source>
        <strain>BTAi1 / ATCC BAA-1182</strain>
    </source>
</reference>
<organism>
    <name type="scientific">Bradyrhizobium sp. (strain BTAi1 / ATCC BAA-1182)</name>
    <dbReference type="NCBI Taxonomy" id="288000"/>
    <lineage>
        <taxon>Bacteria</taxon>
        <taxon>Pseudomonadati</taxon>
        <taxon>Pseudomonadota</taxon>
        <taxon>Alphaproteobacteria</taxon>
        <taxon>Hyphomicrobiales</taxon>
        <taxon>Nitrobacteraceae</taxon>
        <taxon>Bradyrhizobium</taxon>
    </lineage>
</organism>
<keyword id="KW-0975">Bacterial flagellum</keyword>
<keyword id="KW-0574">Periplasm</keyword>
<keyword id="KW-1185">Reference proteome</keyword>
<keyword id="KW-0732">Signal</keyword>
<gene>
    <name evidence="1" type="primary">flgI</name>
    <name type="ordered locus">BBta_5520</name>
</gene>
<feature type="signal peptide" evidence="1">
    <location>
        <begin position="1"/>
        <end position="29"/>
    </location>
</feature>
<feature type="chain" id="PRO_1000050105" description="Flagellar P-ring protein">
    <location>
        <begin position="30"/>
        <end position="374"/>
    </location>
</feature>
<evidence type="ECO:0000255" key="1">
    <source>
        <dbReference type="HAMAP-Rule" id="MF_00416"/>
    </source>
</evidence>
<protein>
    <recommendedName>
        <fullName evidence="1">Flagellar P-ring protein</fullName>
    </recommendedName>
    <alternativeName>
        <fullName evidence="1">Basal body P-ring protein</fullName>
    </alternativeName>
</protein>
<dbReference type="EMBL" id="CP000494">
    <property type="protein sequence ID" value="ABQ37481.1"/>
    <property type="molecule type" value="Genomic_DNA"/>
</dbReference>
<dbReference type="RefSeq" id="WP_012045441.1">
    <property type="nucleotide sequence ID" value="NC_009485.1"/>
</dbReference>
<dbReference type="SMR" id="A5EMT7"/>
<dbReference type="STRING" id="288000.BBta_5520"/>
<dbReference type="KEGG" id="bbt:BBta_5520"/>
<dbReference type="eggNOG" id="COG1706">
    <property type="taxonomic scope" value="Bacteria"/>
</dbReference>
<dbReference type="HOGENOM" id="CLU_045235_1_0_5"/>
<dbReference type="OrthoDB" id="9786431at2"/>
<dbReference type="Proteomes" id="UP000000246">
    <property type="component" value="Chromosome"/>
</dbReference>
<dbReference type="GO" id="GO:0009428">
    <property type="term" value="C:bacterial-type flagellum basal body, distal rod, P ring"/>
    <property type="evidence" value="ECO:0007669"/>
    <property type="project" value="InterPro"/>
</dbReference>
<dbReference type="GO" id="GO:0030288">
    <property type="term" value="C:outer membrane-bounded periplasmic space"/>
    <property type="evidence" value="ECO:0007669"/>
    <property type="project" value="InterPro"/>
</dbReference>
<dbReference type="GO" id="GO:0005198">
    <property type="term" value="F:structural molecule activity"/>
    <property type="evidence" value="ECO:0007669"/>
    <property type="project" value="InterPro"/>
</dbReference>
<dbReference type="GO" id="GO:0071973">
    <property type="term" value="P:bacterial-type flagellum-dependent cell motility"/>
    <property type="evidence" value="ECO:0007669"/>
    <property type="project" value="InterPro"/>
</dbReference>
<dbReference type="HAMAP" id="MF_00416">
    <property type="entry name" value="FlgI"/>
    <property type="match status" value="1"/>
</dbReference>
<dbReference type="InterPro" id="IPR001782">
    <property type="entry name" value="Flag_FlgI"/>
</dbReference>
<dbReference type="NCBIfam" id="NF003676">
    <property type="entry name" value="PRK05303.1"/>
    <property type="match status" value="1"/>
</dbReference>
<dbReference type="PANTHER" id="PTHR30381">
    <property type="entry name" value="FLAGELLAR P-RING PERIPLASMIC PROTEIN FLGI"/>
    <property type="match status" value="1"/>
</dbReference>
<dbReference type="PANTHER" id="PTHR30381:SF0">
    <property type="entry name" value="FLAGELLAR P-RING PROTEIN"/>
    <property type="match status" value="1"/>
</dbReference>
<dbReference type="Pfam" id="PF02119">
    <property type="entry name" value="FlgI"/>
    <property type="match status" value="1"/>
</dbReference>
<dbReference type="PRINTS" id="PR01010">
    <property type="entry name" value="FLGPRINGFLGI"/>
</dbReference>
<accession>A5EMT7</accession>
<name>FLGI_BRASB</name>
<comment type="function">
    <text evidence="1">Assembles around the rod to form the L-ring and probably protects the motor/basal body from shearing forces during rotation.</text>
</comment>
<comment type="subunit">
    <text evidence="1">The basal body constitutes a major portion of the flagellar organelle and consists of four rings (L,P,S, and M) mounted on a central rod.</text>
</comment>
<comment type="subcellular location">
    <subcellularLocation>
        <location evidence="1">Periplasm</location>
    </subcellularLocation>
    <subcellularLocation>
        <location evidence="1">Bacterial flagellum basal body</location>
    </subcellularLocation>
</comment>
<comment type="similarity">
    <text evidence="1">Belongs to the FlgI family.</text>
</comment>
<sequence length="374" mass="39158">MRRVRTTRLFQVACAAIVALASSAMSAHATSRIKDLANIEGVRQNQLIGYGLVVGLNGTGDTLNNIPFTKQSLQAMLERMGVNIRGATIRTGNVAAVMVTGNLPPFATQGTRMDVTVSALGDAKNLQGGTLLVTPLLGADGNVYAVAQGSLAISGFQAEGEAAKIVRGVPTVGRIANGAIIEREIEFALNRLPNVRLALRNADFTTAKRIAAAINDFLGVKTAEPIDPSTVQLSIPPEFKGNVVAFLTEIEQLQVDPDLAAKIVIDERSGIIVMGRDVRVATVAVAQGNLTVTISESPQVSQPNPLSQGRTVVTPRTSVGVTEDGKKFAVVKDGVSLQQLVDGLNGLGIGPRDLISILQAIKAAGAIEADIEVM</sequence>